<comment type="function">
    <text>Visual pigments are the light-absorbing molecules that mediate vision. They consist of an apoprotein, opsin, covalently linked to cis-retinal.</text>
</comment>
<comment type="biophysicochemical properties">
    <absorption>
        <max evidence="5">558 nm</max>
    </absorption>
</comment>
<comment type="subcellular location">
    <subcellularLocation>
        <location>Membrane</location>
        <topology>Multi-pass membrane protein</topology>
    </subcellularLocation>
</comment>
<comment type="tissue specificity">
    <text evidence="4">Retinal double cone principal photoreceptor cell outer segments.</text>
</comment>
<comment type="developmental stage">
    <text evidence="6">First detected in the retina at 51 hours post fertilization (hpf) along the nasal edge of the choroid fissure. By 55 hpf expression has extended into the nasal region and by 72 hpf it covers the whole retina.</text>
</comment>
<comment type="PTM">
    <text evidence="1">Phosphorylated on some or all of the serine and threonine residues present in the C-terminal region.</text>
</comment>
<comment type="similarity">
    <text evidence="3">Belongs to the G-protein coupled receptor 1 family. Opsin subfamily.</text>
</comment>
<protein>
    <recommendedName>
        <fullName>Red-sensitive opsin-1</fullName>
    </recommendedName>
    <alternativeName>
        <fullName>Opsin-1, long-wave-sensitive 1</fullName>
        <shortName>Opsin LWS-1</shortName>
    </alternativeName>
    <alternativeName>
        <fullName>Red cone photoreceptor pigment 1</fullName>
    </alternativeName>
</protein>
<evidence type="ECO:0000250" key="1"/>
<evidence type="ECO:0000255" key="2"/>
<evidence type="ECO:0000255" key="3">
    <source>
        <dbReference type="PROSITE-ProRule" id="PRU00521"/>
    </source>
</evidence>
<evidence type="ECO:0000269" key="4">
    <source>
    </source>
</evidence>
<evidence type="ECO:0000269" key="5">
    <source>
    </source>
</evidence>
<evidence type="ECO:0000269" key="6">
    <source>
    </source>
</evidence>
<evidence type="ECO:0000305" key="7"/>
<accession>Q9W6A7</accession>
<accession>Q9PWN3</accession>
<keyword id="KW-0157">Chromophore</keyword>
<keyword id="KW-1015">Disulfide bond</keyword>
<keyword id="KW-0297">G-protein coupled receptor</keyword>
<keyword id="KW-0325">Glycoprotein</keyword>
<keyword id="KW-0472">Membrane</keyword>
<keyword id="KW-0597">Phosphoprotein</keyword>
<keyword id="KW-0600">Photoreceptor protein</keyword>
<keyword id="KW-0675">Receptor</keyword>
<keyword id="KW-1185">Reference proteome</keyword>
<keyword id="KW-0681">Retinal protein</keyword>
<keyword id="KW-0716">Sensory transduction</keyword>
<keyword id="KW-0807">Transducer</keyword>
<keyword id="KW-0812">Transmembrane</keyword>
<keyword id="KW-1133">Transmembrane helix</keyword>
<keyword id="KW-0844">Vision</keyword>
<sequence length="357" mass="39888">MAEHWGDAIYAARRKGDETTREAMFTYTNSNNTKDPFEGPNYHIAPRWVYNVATVWMFFVVVASTFTNGLVLVATAKFKKLRHPLNWILVNLAIADLGETLFASTISVINQFFGYFILGHPMCIFEGYTVSVCGIAALWSLTVISWERWVVVCKPFGNVKFDAKWASAGIIFSWVWAAAWCAPPIFGWSRYWPHGLKTSCGPDVFSGSEDPGVQSYMVVLMITCCIIPLAIIILCYIAVYLAIHAVAQQQKDSESTQKAEKEVSRMVVVMIFAYCFCWGPYTFFACFAAANPGYAFHPLAAAMPAYFAKSATIYNPVIYVFMNRQFRVCIMQLFGKKVDDGSEVSTSKTEVSSVAPA</sequence>
<reference key="1">
    <citation type="journal article" date="1995" name="Vis. Neurosci.">
        <title>Temporal and spatial patterns of opsin gene expression in zebrafish (Danio rerio).</title>
        <authorList>
            <person name="Robinson J."/>
            <person name="Schmitt E.A."/>
            <person name="Dowling J.E."/>
        </authorList>
    </citation>
    <scope>NUCLEOTIDE SEQUENCE [MRNA]</scope>
    <scope>DEVELOPMENTAL STAGE</scope>
    <source>
        <tissue>Retina</tissue>
    </source>
</reference>
<reference key="2">
    <citation type="journal article" date="1999" name="Vis. Neurosci.">
        <authorList>
            <person name="Schmitt E.A."/>
            <person name="Hyatt G.A."/>
            <person name="Dowling J.E."/>
        </authorList>
    </citation>
    <scope>ERRATUM OF PUBMED:8924413</scope>
</reference>
<reference key="3">
    <citation type="journal article" date="1999" name="Vis. Neurosci.">
        <title>Cloning and characterization of six zebrafish photoreceptor opsin cDNAs and immunolocalization of their corresponding proteins.</title>
        <authorList>
            <person name="Vihtelic T.S."/>
            <person name="Doro C.J."/>
            <person name="Hyde D.R."/>
        </authorList>
    </citation>
    <scope>NUCLEOTIDE SEQUENCE [MRNA]</scope>
    <scope>TISSUE SPECIFICITY</scope>
    <source>
        <tissue>Eye</tissue>
    </source>
</reference>
<reference key="4">
    <citation type="journal article" date="2003" name="Genetics">
        <title>Gene duplication and spectral diversification of cone visual pigments of zebrafish.</title>
        <authorList>
            <person name="Chinen A."/>
            <person name="Hamaoka T."/>
            <person name="Yamada Y."/>
            <person name="Kawamura S."/>
        </authorList>
    </citation>
    <scope>NUCLEOTIDE SEQUENCE [GENOMIC DNA / MRNA]</scope>
    <scope>BIOPHYSICOCHEMICAL PROPERTIES</scope>
    <source>
        <strain>AB</strain>
        <tissue>Eye</tissue>
    </source>
</reference>
<reference key="5">
    <citation type="submission" date="2003-10" db="EMBL/GenBank/DDBJ databases">
        <authorList>
            <consortium name="NIH - Zebrafish Gene Collection (ZGC) project"/>
        </authorList>
    </citation>
    <scope>NUCLEOTIDE SEQUENCE [LARGE SCALE MRNA]</scope>
    <source>
        <tissue>Eye</tissue>
    </source>
</reference>
<dbReference type="EMBL" id="AF104904">
    <property type="protein sequence ID" value="AAD20549.1"/>
    <property type="molecule type" value="mRNA"/>
</dbReference>
<dbReference type="EMBL" id="AF109371">
    <property type="protein sequence ID" value="AAD24754.1"/>
    <property type="molecule type" value="mRNA"/>
</dbReference>
<dbReference type="EMBL" id="AB087803">
    <property type="protein sequence ID" value="BAC24127.1"/>
    <property type="molecule type" value="Genomic_DNA"/>
</dbReference>
<dbReference type="EMBL" id="BC059415">
    <property type="protein sequence ID" value="AAH59415.1"/>
    <property type="molecule type" value="mRNA"/>
</dbReference>
<dbReference type="RefSeq" id="NP_001300644.1">
    <property type="nucleotide sequence ID" value="NM_001313715.1"/>
</dbReference>
<dbReference type="SMR" id="Q9W6A7"/>
<dbReference type="FunCoup" id="Q9W6A7">
    <property type="interactions" value="547"/>
</dbReference>
<dbReference type="STRING" id="7955.ENSDARP00000065940"/>
<dbReference type="GlyCosmos" id="Q9W6A7">
    <property type="glycosylation" value="1 site, No reported glycans"/>
</dbReference>
<dbReference type="PaxDb" id="7955-ENSDARP00000065940"/>
<dbReference type="Ensembl" id="ENSDART00000065941">
    <property type="protein sequence ID" value="ENSDARP00000065940"/>
    <property type="gene ID" value="ENSDARG00000044862"/>
</dbReference>
<dbReference type="GeneID" id="30413"/>
<dbReference type="KEGG" id="dre:30413"/>
<dbReference type="AGR" id="ZFIN:ZDB-GENE-990604-41"/>
<dbReference type="CTD" id="30413"/>
<dbReference type="ZFIN" id="ZDB-GENE-990604-41">
    <property type="gene designation" value="opn1lw1"/>
</dbReference>
<dbReference type="eggNOG" id="KOG3656">
    <property type="taxonomic scope" value="Eukaryota"/>
</dbReference>
<dbReference type="HOGENOM" id="CLU_009579_3_0_1"/>
<dbReference type="InParanoid" id="Q9W6A7"/>
<dbReference type="OMA" id="RRICKER"/>
<dbReference type="OrthoDB" id="8545112at2759"/>
<dbReference type="PhylomeDB" id="Q9W6A7"/>
<dbReference type="TreeFam" id="TF324998"/>
<dbReference type="Reactome" id="R-DRE-2187335">
    <property type="pathway name" value="The retinoid cycle in cones (daylight vision)"/>
</dbReference>
<dbReference type="Reactome" id="R-DRE-418594">
    <property type="pathway name" value="G alpha (i) signalling events"/>
</dbReference>
<dbReference type="Reactome" id="R-DRE-419771">
    <property type="pathway name" value="Opsins"/>
</dbReference>
<dbReference type="PRO" id="PR:Q9W6A7"/>
<dbReference type="Proteomes" id="UP000000437">
    <property type="component" value="Alternate scaffold 11"/>
</dbReference>
<dbReference type="Proteomes" id="UP000000437">
    <property type="component" value="Chromosome 11"/>
</dbReference>
<dbReference type="Bgee" id="ENSDARG00000044862">
    <property type="expression patterns" value="Expressed in head and 4 other cell types or tissues"/>
</dbReference>
<dbReference type="ExpressionAtlas" id="Q9W6A7">
    <property type="expression patterns" value="baseline and differential"/>
</dbReference>
<dbReference type="GO" id="GO:0001750">
    <property type="term" value="C:photoreceptor outer segment"/>
    <property type="evidence" value="ECO:0000318"/>
    <property type="project" value="GO_Central"/>
</dbReference>
<dbReference type="GO" id="GO:0005886">
    <property type="term" value="C:plasma membrane"/>
    <property type="evidence" value="ECO:0000318"/>
    <property type="project" value="GO_Central"/>
</dbReference>
<dbReference type="GO" id="GO:0008020">
    <property type="term" value="F:G protein-coupled photoreceptor activity"/>
    <property type="evidence" value="ECO:0000318"/>
    <property type="project" value="GO_Central"/>
</dbReference>
<dbReference type="GO" id="GO:0009883">
    <property type="term" value="F:red or far-red light photoreceptor activity"/>
    <property type="evidence" value="ECO:0000303"/>
    <property type="project" value="UniProtKB"/>
</dbReference>
<dbReference type="GO" id="GO:0071482">
    <property type="term" value="P:cellular response to light stimulus"/>
    <property type="evidence" value="ECO:0000318"/>
    <property type="project" value="GO_Central"/>
</dbReference>
<dbReference type="GO" id="GO:0007186">
    <property type="term" value="P:G protein-coupled receptor signaling pathway"/>
    <property type="evidence" value="ECO:0000318"/>
    <property type="project" value="GO_Central"/>
</dbReference>
<dbReference type="GO" id="GO:0009648">
    <property type="term" value="P:photoperiodism"/>
    <property type="evidence" value="ECO:0000314"/>
    <property type="project" value="ZFIN"/>
</dbReference>
<dbReference type="GO" id="GO:0007602">
    <property type="term" value="P:phototransduction"/>
    <property type="evidence" value="ECO:0000318"/>
    <property type="project" value="GO_Central"/>
</dbReference>
<dbReference type="GO" id="GO:0009416">
    <property type="term" value="P:response to light stimulus"/>
    <property type="evidence" value="ECO:0000314"/>
    <property type="project" value="ZFIN"/>
</dbReference>
<dbReference type="GO" id="GO:0007601">
    <property type="term" value="P:visual perception"/>
    <property type="evidence" value="ECO:0000303"/>
    <property type="project" value="UniProtKB"/>
</dbReference>
<dbReference type="CDD" id="cd15081">
    <property type="entry name" value="7tmA_LWS_opsin"/>
    <property type="match status" value="1"/>
</dbReference>
<dbReference type="FunFam" id="1.20.1070.10:FF:000090">
    <property type="entry name" value="Long-wave-sensitive opsin 1"/>
    <property type="match status" value="1"/>
</dbReference>
<dbReference type="Gene3D" id="1.20.1070.10">
    <property type="entry name" value="Rhodopsin 7-helix transmembrane proteins"/>
    <property type="match status" value="1"/>
</dbReference>
<dbReference type="InterPro" id="IPR050125">
    <property type="entry name" value="GPCR_opsins"/>
</dbReference>
<dbReference type="InterPro" id="IPR000276">
    <property type="entry name" value="GPCR_Rhodpsn"/>
</dbReference>
<dbReference type="InterPro" id="IPR017452">
    <property type="entry name" value="GPCR_Rhodpsn_7TM"/>
</dbReference>
<dbReference type="InterPro" id="IPR001760">
    <property type="entry name" value="Opsin"/>
</dbReference>
<dbReference type="InterPro" id="IPR000378">
    <property type="entry name" value="Opsin_red/grn"/>
</dbReference>
<dbReference type="InterPro" id="IPR027430">
    <property type="entry name" value="Retinal_BS"/>
</dbReference>
<dbReference type="PANTHER" id="PTHR24240">
    <property type="entry name" value="OPSIN"/>
    <property type="match status" value="1"/>
</dbReference>
<dbReference type="Pfam" id="PF00001">
    <property type="entry name" value="7tm_1"/>
    <property type="match status" value="1"/>
</dbReference>
<dbReference type="PRINTS" id="PR00237">
    <property type="entry name" value="GPCRRHODOPSN"/>
</dbReference>
<dbReference type="PRINTS" id="PR00238">
    <property type="entry name" value="OPSIN"/>
</dbReference>
<dbReference type="PRINTS" id="PR00575">
    <property type="entry name" value="OPSINREDGRN"/>
</dbReference>
<dbReference type="SMART" id="SM01381">
    <property type="entry name" value="7TM_GPCR_Srsx"/>
    <property type="match status" value="1"/>
</dbReference>
<dbReference type="SUPFAM" id="SSF81321">
    <property type="entry name" value="Family A G protein-coupled receptor-like"/>
    <property type="match status" value="1"/>
</dbReference>
<dbReference type="PROSITE" id="PS00237">
    <property type="entry name" value="G_PROTEIN_RECEP_F1_1"/>
    <property type="match status" value="1"/>
</dbReference>
<dbReference type="PROSITE" id="PS50262">
    <property type="entry name" value="G_PROTEIN_RECEP_F1_2"/>
    <property type="match status" value="1"/>
</dbReference>
<dbReference type="PROSITE" id="PS00238">
    <property type="entry name" value="OPSIN"/>
    <property type="match status" value="1"/>
</dbReference>
<gene>
    <name type="primary">opn1lw1</name>
    <name type="synonym">lws1</name>
    <name type="synonym">rdops</name>
</gene>
<feature type="chain" id="PRO_0000197793" description="Red-sensitive opsin-1">
    <location>
        <begin position="1"/>
        <end position="357"/>
    </location>
</feature>
<feature type="topological domain" description="Extracellular" evidence="2">
    <location>
        <begin position="1"/>
        <end position="49"/>
    </location>
</feature>
<feature type="transmembrane region" description="Helical; Name=1" evidence="2">
    <location>
        <begin position="50"/>
        <end position="74"/>
    </location>
</feature>
<feature type="topological domain" description="Cytoplasmic" evidence="2">
    <location>
        <begin position="75"/>
        <end position="86"/>
    </location>
</feature>
<feature type="transmembrane region" description="Helical; Name=2" evidence="2">
    <location>
        <begin position="87"/>
        <end position="112"/>
    </location>
</feature>
<feature type="topological domain" description="Extracellular" evidence="2">
    <location>
        <begin position="113"/>
        <end position="126"/>
    </location>
</feature>
<feature type="transmembrane region" description="Helical; Name=3" evidence="2">
    <location>
        <begin position="127"/>
        <end position="146"/>
    </location>
</feature>
<feature type="topological domain" description="Cytoplasmic" evidence="2">
    <location>
        <begin position="147"/>
        <end position="165"/>
    </location>
</feature>
<feature type="transmembrane region" description="Helical; Name=4" evidence="2">
    <location>
        <begin position="166"/>
        <end position="189"/>
    </location>
</feature>
<feature type="topological domain" description="Extracellular" evidence="2">
    <location>
        <begin position="190"/>
        <end position="215"/>
    </location>
</feature>
<feature type="transmembrane region" description="Helical; Name=5" evidence="2">
    <location>
        <begin position="216"/>
        <end position="243"/>
    </location>
</feature>
<feature type="topological domain" description="Cytoplasmic" evidence="2">
    <location>
        <begin position="244"/>
        <end position="265"/>
    </location>
</feature>
<feature type="transmembrane region" description="Helical; Name=6" evidence="2">
    <location>
        <begin position="266"/>
        <end position="289"/>
    </location>
</feature>
<feature type="topological domain" description="Extracellular" evidence="2">
    <location>
        <begin position="290"/>
        <end position="297"/>
    </location>
</feature>
<feature type="transmembrane region" description="Helical; Name=7" evidence="2">
    <location>
        <begin position="298"/>
        <end position="322"/>
    </location>
</feature>
<feature type="topological domain" description="Cytoplasmic" evidence="2">
    <location>
        <begin position="323"/>
        <end position="357"/>
    </location>
</feature>
<feature type="modified residue" description="N6-(retinylidene)lysine" evidence="1">
    <location>
        <position position="309"/>
    </location>
</feature>
<feature type="glycosylation site" description="N-linked (GlcNAc...) asparagine" evidence="2">
    <location>
        <position position="31"/>
    </location>
</feature>
<feature type="disulfide bond" evidence="3">
    <location>
        <begin position="123"/>
        <end position="200"/>
    </location>
</feature>
<feature type="sequence conflict" description="In Ref. 1; AAD20549." evidence="7" ref="1">
    <location>
        <position position="283"/>
    </location>
</feature>
<organism>
    <name type="scientific">Danio rerio</name>
    <name type="common">Zebrafish</name>
    <name type="synonym">Brachydanio rerio</name>
    <dbReference type="NCBI Taxonomy" id="7955"/>
    <lineage>
        <taxon>Eukaryota</taxon>
        <taxon>Metazoa</taxon>
        <taxon>Chordata</taxon>
        <taxon>Craniata</taxon>
        <taxon>Vertebrata</taxon>
        <taxon>Euteleostomi</taxon>
        <taxon>Actinopterygii</taxon>
        <taxon>Neopterygii</taxon>
        <taxon>Teleostei</taxon>
        <taxon>Ostariophysi</taxon>
        <taxon>Cypriniformes</taxon>
        <taxon>Danionidae</taxon>
        <taxon>Danioninae</taxon>
        <taxon>Danio</taxon>
    </lineage>
</organism>
<name>OPSR1_DANRE</name>
<proteinExistence type="evidence at protein level"/>